<sequence length="171" mass="18822">MQDEAVTENTASTGPQAGPPLVVNVQYVKDLSFEVPGAPQIFAALRTQPQVDLNLDVQVRRLEEQAHIYEVVLAIRAEAVERVEGEEKANTVFIAELSYGGVFTLNGIPDESIEPVLLVECPRLLFPFARTILATVTREGGFPPVQLQPIDFVALWQARRAQQQQETVGNA</sequence>
<gene>
    <name evidence="1" type="primary">secB</name>
    <name type="ordered locus">GbCGDNIH1_2336</name>
</gene>
<accession>Q0BPL8</accession>
<comment type="function">
    <text evidence="1">One of the proteins required for the normal export of preproteins out of the cell cytoplasm. It is a molecular chaperone that binds to a subset of precursor proteins, maintaining them in a translocation-competent state. It also specifically binds to its receptor SecA.</text>
</comment>
<comment type="subunit">
    <text evidence="1">Homotetramer, a dimer of dimers. One homotetramer interacts with 1 SecA dimer.</text>
</comment>
<comment type="subcellular location">
    <subcellularLocation>
        <location evidence="1">Cytoplasm</location>
    </subcellularLocation>
</comment>
<comment type="similarity">
    <text evidence="1">Belongs to the SecB family.</text>
</comment>
<comment type="sequence caution" evidence="2">
    <conflict type="erroneous initiation">
        <sequence resource="EMBL-CDS" id="ABI63234"/>
    </conflict>
</comment>
<feature type="chain" id="PRO_0000318238" description="Protein-export protein SecB">
    <location>
        <begin position="1"/>
        <end position="171"/>
    </location>
</feature>
<reference key="1">
    <citation type="journal article" date="2007" name="J. Bacteriol.">
        <title>Genome sequence analysis of the emerging human pathogenic acetic acid bacterium Granulibacter bethesdensis.</title>
        <authorList>
            <person name="Greenberg D.E."/>
            <person name="Porcella S.F."/>
            <person name="Zelazny A.M."/>
            <person name="Virtaneva K."/>
            <person name="Sturdevant D.E."/>
            <person name="Kupko J.J. III"/>
            <person name="Barbian K.D."/>
            <person name="Babar A."/>
            <person name="Dorward D.W."/>
            <person name="Holland S.M."/>
        </authorList>
    </citation>
    <scope>NUCLEOTIDE SEQUENCE [LARGE SCALE GENOMIC DNA]</scope>
    <source>
        <strain>ATCC BAA-1260 / CGDNIH1</strain>
    </source>
</reference>
<protein>
    <recommendedName>
        <fullName evidence="1">Protein-export protein SecB</fullName>
    </recommendedName>
</protein>
<proteinExistence type="inferred from homology"/>
<keyword id="KW-0143">Chaperone</keyword>
<keyword id="KW-0963">Cytoplasm</keyword>
<keyword id="KW-0653">Protein transport</keyword>
<keyword id="KW-1185">Reference proteome</keyword>
<keyword id="KW-0811">Translocation</keyword>
<keyword id="KW-0813">Transport</keyword>
<evidence type="ECO:0000255" key="1">
    <source>
        <dbReference type="HAMAP-Rule" id="MF_00821"/>
    </source>
</evidence>
<evidence type="ECO:0000305" key="2"/>
<dbReference type="EMBL" id="CP000394">
    <property type="protein sequence ID" value="ABI63234.1"/>
    <property type="status" value="ALT_INIT"/>
    <property type="molecule type" value="Genomic_DNA"/>
</dbReference>
<dbReference type="SMR" id="Q0BPL8"/>
<dbReference type="STRING" id="391165.GbCGDNIH1_2336"/>
<dbReference type="KEGG" id="gbe:GbCGDNIH1_2336"/>
<dbReference type="eggNOG" id="COG1952">
    <property type="taxonomic scope" value="Bacteria"/>
</dbReference>
<dbReference type="HOGENOM" id="CLU_111574_0_0_5"/>
<dbReference type="Proteomes" id="UP000001963">
    <property type="component" value="Chromosome"/>
</dbReference>
<dbReference type="GO" id="GO:0005737">
    <property type="term" value="C:cytoplasm"/>
    <property type="evidence" value="ECO:0007669"/>
    <property type="project" value="UniProtKB-SubCell"/>
</dbReference>
<dbReference type="GO" id="GO:0051082">
    <property type="term" value="F:unfolded protein binding"/>
    <property type="evidence" value="ECO:0007669"/>
    <property type="project" value="InterPro"/>
</dbReference>
<dbReference type="GO" id="GO:0006457">
    <property type="term" value="P:protein folding"/>
    <property type="evidence" value="ECO:0007669"/>
    <property type="project" value="UniProtKB-UniRule"/>
</dbReference>
<dbReference type="GO" id="GO:0051262">
    <property type="term" value="P:protein tetramerization"/>
    <property type="evidence" value="ECO:0007669"/>
    <property type="project" value="InterPro"/>
</dbReference>
<dbReference type="GO" id="GO:0015031">
    <property type="term" value="P:protein transport"/>
    <property type="evidence" value="ECO:0007669"/>
    <property type="project" value="UniProtKB-UniRule"/>
</dbReference>
<dbReference type="Gene3D" id="3.10.420.10">
    <property type="entry name" value="SecB-like"/>
    <property type="match status" value="1"/>
</dbReference>
<dbReference type="HAMAP" id="MF_00821">
    <property type="entry name" value="SecB"/>
    <property type="match status" value="1"/>
</dbReference>
<dbReference type="InterPro" id="IPR003708">
    <property type="entry name" value="SecB"/>
</dbReference>
<dbReference type="InterPro" id="IPR035958">
    <property type="entry name" value="SecB-like_sf"/>
</dbReference>
<dbReference type="NCBIfam" id="NF004392">
    <property type="entry name" value="PRK05751.1-3"/>
    <property type="match status" value="1"/>
</dbReference>
<dbReference type="NCBIfam" id="TIGR00809">
    <property type="entry name" value="secB"/>
    <property type="match status" value="1"/>
</dbReference>
<dbReference type="PANTHER" id="PTHR36918">
    <property type="match status" value="1"/>
</dbReference>
<dbReference type="PANTHER" id="PTHR36918:SF1">
    <property type="entry name" value="PROTEIN-EXPORT PROTEIN SECB"/>
    <property type="match status" value="1"/>
</dbReference>
<dbReference type="Pfam" id="PF02556">
    <property type="entry name" value="SecB"/>
    <property type="match status" value="1"/>
</dbReference>
<dbReference type="PRINTS" id="PR01594">
    <property type="entry name" value="SECBCHAPRONE"/>
</dbReference>
<dbReference type="SUPFAM" id="SSF54611">
    <property type="entry name" value="SecB-like"/>
    <property type="match status" value="1"/>
</dbReference>
<organism>
    <name type="scientific">Granulibacter bethesdensis (strain ATCC BAA-1260 / CGDNIH1)</name>
    <dbReference type="NCBI Taxonomy" id="391165"/>
    <lineage>
        <taxon>Bacteria</taxon>
        <taxon>Pseudomonadati</taxon>
        <taxon>Pseudomonadota</taxon>
        <taxon>Alphaproteobacteria</taxon>
        <taxon>Acetobacterales</taxon>
        <taxon>Acetobacteraceae</taxon>
        <taxon>Granulibacter</taxon>
    </lineage>
</organism>
<name>SECB_GRABC</name>